<evidence type="ECO:0000250" key="1"/>
<evidence type="ECO:0000305" key="2"/>
<sequence length="451" mass="51626">MEKSNGLRVILFPLPLQGCINPMIQLAKILHSRGFSITVIHTCFNAPKASSHPLFTFIQIQDGLSETETRTRDVKLLITLLNQNCESPVRECLRKLLQSAKEEKQRISCLINDSGWIFTQHLAKSLNLMRLAFNTYKISFFRSHFVLPQLRREMFLPLQDSEQDDPVEKFPPLRKKDLLRILEADSVQGDSYSDMILEKTKASSGLIFMSCEELDQDSLSQSREDFKVPIFAIGPSHSHFPASSSSLFTPDETCIPWLDRQEDKSVIYVSIGSLVTINETELMEIAWGLSNSDQPFLWVVRVGSVNGTEWIEAIPEYFIKRLNEKGKIVKWAPQQEVLKHRAIGGFLTHNGWNSTVESVCEGVPMICLPFRWDQLLNARFVSDVWMVGIHLEGRIERDEIERAIRRLLLETEGEAIRERIQLLKEKVGRSVKQNGSAYQSLQNLINYISSF</sequence>
<gene>
    <name type="primary">UGT76C4</name>
    <name type="ordered locus">At5g05880</name>
    <name type="ORF">K18J17.3</name>
</gene>
<proteinExistence type="evidence at transcript level"/>
<name>U76C4_ARATH</name>
<comment type="similarity">
    <text evidence="2">Belongs to the UDP-glycosyltransferase family.</text>
</comment>
<organism>
    <name type="scientific">Arabidopsis thaliana</name>
    <name type="common">Mouse-ear cress</name>
    <dbReference type="NCBI Taxonomy" id="3702"/>
    <lineage>
        <taxon>Eukaryota</taxon>
        <taxon>Viridiplantae</taxon>
        <taxon>Streptophyta</taxon>
        <taxon>Embryophyta</taxon>
        <taxon>Tracheophyta</taxon>
        <taxon>Spermatophyta</taxon>
        <taxon>Magnoliopsida</taxon>
        <taxon>eudicotyledons</taxon>
        <taxon>Gunneridae</taxon>
        <taxon>Pentapetalae</taxon>
        <taxon>rosids</taxon>
        <taxon>malvids</taxon>
        <taxon>Brassicales</taxon>
        <taxon>Brassicaceae</taxon>
        <taxon>Camelineae</taxon>
        <taxon>Arabidopsis</taxon>
    </lineage>
</organism>
<feature type="chain" id="PRO_0000409083" description="UDP-glycosyltransferase 76C4">
    <location>
        <begin position="1"/>
        <end position="451"/>
    </location>
</feature>
<feature type="binding site" evidence="1">
    <location>
        <position position="273"/>
    </location>
    <ligand>
        <name>UDP-alpha-D-glucose</name>
        <dbReference type="ChEBI" id="CHEBI:58885"/>
    </ligand>
</feature>
<feature type="binding site" evidence="1">
    <location>
        <begin position="332"/>
        <end position="334"/>
    </location>
    <ligand>
        <name>UDP-alpha-D-glucose</name>
        <dbReference type="ChEBI" id="CHEBI:58885"/>
    </ligand>
</feature>
<feature type="binding site" evidence="1">
    <location>
        <begin position="349"/>
        <end position="357"/>
    </location>
    <ligand>
        <name>UDP-alpha-D-glucose</name>
        <dbReference type="ChEBI" id="CHEBI:58885"/>
    </ligand>
</feature>
<feature type="binding site" evidence="1">
    <location>
        <begin position="371"/>
        <end position="374"/>
    </location>
    <ligand>
        <name>UDP-alpha-D-glucose</name>
        <dbReference type="ChEBI" id="CHEBI:58885"/>
    </ligand>
</feature>
<reference key="1">
    <citation type="journal article" date="1999" name="DNA Res.">
        <title>Structural analysis of Arabidopsis thaliana chromosome 5. IX. Sequence features of the regions of 1,011,550 bp covered by seventeen P1 and TAC clones.</title>
        <authorList>
            <person name="Kaneko T."/>
            <person name="Katoh T."/>
            <person name="Sato S."/>
            <person name="Nakamura Y."/>
            <person name="Asamizu E."/>
            <person name="Kotani H."/>
            <person name="Miyajima N."/>
            <person name="Tabata S."/>
        </authorList>
    </citation>
    <scope>NUCLEOTIDE SEQUENCE [LARGE SCALE GENOMIC DNA]</scope>
    <source>
        <strain>cv. Columbia</strain>
    </source>
</reference>
<reference key="2">
    <citation type="journal article" date="2017" name="Plant J.">
        <title>Araport11: a complete reannotation of the Arabidopsis thaliana reference genome.</title>
        <authorList>
            <person name="Cheng C.Y."/>
            <person name="Krishnakumar V."/>
            <person name="Chan A.P."/>
            <person name="Thibaud-Nissen F."/>
            <person name="Schobel S."/>
            <person name="Town C.D."/>
        </authorList>
    </citation>
    <scope>GENOME REANNOTATION</scope>
    <source>
        <strain>cv. Columbia</strain>
    </source>
</reference>
<reference key="3">
    <citation type="journal article" date="2001" name="J. Biol. Chem.">
        <title>Phylogenetic analysis of the UDP-glycosyltransferase multigene family of Arabidopsis thaliana.</title>
        <authorList>
            <person name="Li Y."/>
            <person name="Baldauf S."/>
            <person name="Lim E.K."/>
            <person name="Bowles D.J."/>
        </authorList>
    </citation>
    <scope>GENE FAMILY</scope>
</reference>
<accession>Q9FI98</accession>
<dbReference type="EC" id="2.4.1.-"/>
<dbReference type="EMBL" id="AB017060">
    <property type="protein sequence ID" value="BAB10793.1"/>
    <property type="molecule type" value="Genomic_DNA"/>
</dbReference>
<dbReference type="EMBL" id="CP002688">
    <property type="protein sequence ID" value="AED90935.1"/>
    <property type="molecule type" value="Genomic_DNA"/>
</dbReference>
<dbReference type="RefSeq" id="NP_196207.1">
    <property type="nucleotide sequence ID" value="NM_120670.2"/>
</dbReference>
<dbReference type="SMR" id="Q9FI98"/>
<dbReference type="FunCoup" id="Q9FI98">
    <property type="interactions" value="141"/>
</dbReference>
<dbReference type="STRING" id="3702.Q9FI98"/>
<dbReference type="CAZy" id="GT1">
    <property type="family name" value="Glycosyltransferase Family 1"/>
</dbReference>
<dbReference type="PaxDb" id="3702-AT5G05880.1"/>
<dbReference type="ProteomicsDB" id="242615"/>
<dbReference type="EnsemblPlants" id="AT5G05880.1">
    <property type="protein sequence ID" value="AT5G05880.1"/>
    <property type="gene ID" value="AT5G05880"/>
</dbReference>
<dbReference type="GeneID" id="830473"/>
<dbReference type="Gramene" id="AT5G05880.1">
    <property type="protein sequence ID" value="AT5G05880.1"/>
    <property type="gene ID" value="AT5G05880"/>
</dbReference>
<dbReference type="KEGG" id="ath:AT5G05880"/>
<dbReference type="Araport" id="AT5G05880"/>
<dbReference type="TAIR" id="AT5G05880">
    <property type="gene designation" value="UGT76C4"/>
</dbReference>
<dbReference type="eggNOG" id="KOG1192">
    <property type="taxonomic scope" value="Eukaryota"/>
</dbReference>
<dbReference type="HOGENOM" id="CLU_001724_0_0_1"/>
<dbReference type="InParanoid" id="Q9FI98"/>
<dbReference type="OMA" id="INDSGWI"/>
<dbReference type="PhylomeDB" id="Q9FI98"/>
<dbReference type="BioCyc" id="ARA:AT5G05880-MONOMER"/>
<dbReference type="PRO" id="PR:Q9FI98"/>
<dbReference type="Proteomes" id="UP000006548">
    <property type="component" value="Chromosome 5"/>
</dbReference>
<dbReference type="ExpressionAtlas" id="Q9FI98">
    <property type="expression patterns" value="baseline and differential"/>
</dbReference>
<dbReference type="GO" id="GO:0005829">
    <property type="term" value="C:cytosol"/>
    <property type="evidence" value="ECO:0000314"/>
    <property type="project" value="TAIR"/>
</dbReference>
<dbReference type="GO" id="GO:0050139">
    <property type="term" value="F:nicotinate-N-glucosyltransferase activity"/>
    <property type="evidence" value="ECO:0000314"/>
    <property type="project" value="TAIR"/>
</dbReference>
<dbReference type="CDD" id="cd03784">
    <property type="entry name" value="GT1_Gtf-like"/>
    <property type="match status" value="1"/>
</dbReference>
<dbReference type="FunFam" id="3.40.50.2000:FF:000040">
    <property type="entry name" value="UDP-glycosyltransferase 76C1"/>
    <property type="match status" value="1"/>
</dbReference>
<dbReference type="FunFam" id="3.40.50.2000:FF:000120">
    <property type="entry name" value="UDP-glycosyltransferase 76C1"/>
    <property type="match status" value="1"/>
</dbReference>
<dbReference type="Gene3D" id="3.40.50.2000">
    <property type="entry name" value="Glycogen Phosphorylase B"/>
    <property type="match status" value="2"/>
</dbReference>
<dbReference type="InterPro" id="IPR002213">
    <property type="entry name" value="UDP_glucos_trans"/>
</dbReference>
<dbReference type="PANTHER" id="PTHR11926">
    <property type="entry name" value="GLUCOSYL/GLUCURONOSYL TRANSFERASES"/>
    <property type="match status" value="1"/>
</dbReference>
<dbReference type="PANTHER" id="PTHR11926:SF906">
    <property type="entry name" value="UDP-GLYCOSYLTRANSFERASE 76C3-RELATED"/>
    <property type="match status" value="1"/>
</dbReference>
<dbReference type="Pfam" id="PF00201">
    <property type="entry name" value="UDPGT"/>
    <property type="match status" value="1"/>
</dbReference>
<dbReference type="SUPFAM" id="SSF53756">
    <property type="entry name" value="UDP-Glycosyltransferase/glycogen phosphorylase"/>
    <property type="match status" value="1"/>
</dbReference>
<protein>
    <recommendedName>
        <fullName>UDP-glycosyltransferase 76C4</fullName>
        <ecNumber>2.4.1.-</ecNumber>
    </recommendedName>
</protein>
<keyword id="KW-0328">Glycosyltransferase</keyword>
<keyword id="KW-1185">Reference proteome</keyword>
<keyword id="KW-0808">Transferase</keyword>